<gene>
    <name type="primary">nuoL</name>
    <name type="ordered locus">PA2647</name>
</gene>
<name>NUOL_PSEAE</name>
<proteinExistence type="inferred from homology"/>
<accession>Q9I0J1</accession>
<organism>
    <name type="scientific">Pseudomonas aeruginosa (strain ATCC 15692 / DSM 22644 / CIP 104116 / JCM 14847 / LMG 12228 / 1C / PRS 101 / PAO1)</name>
    <dbReference type="NCBI Taxonomy" id="208964"/>
    <lineage>
        <taxon>Bacteria</taxon>
        <taxon>Pseudomonadati</taxon>
        <taxon>Pseudomonadota</taxon>
        <taxon>Gammaproteobacteria</taxon>
        <taxon>Pseudomonadales</taxon>
        <taxon>Pseudomonadaceae</taxon>
        <taxon>Pseudomonas</taxon>
    </lineage>
</organism>
<feature type="chain" id="PRO_0000287831" description="NADH-quinone oxidoreductase subunit L">
    <location>
        <begin position="1"/>
        <end position="615"/>
    </location>
</feature>
<feature type="transmembrane region" description="Helical" evidence="2">
    <location>
        <begin position="1"/>
        <end position="21"/>
    </location>
</feature>
<feature type="transmembrane region" description="Helical" evidence="2">
    <location>
        <begin position="32"/>
        <end position="52"/>
    </location>
</feature>
<feature type="transmembrane region" description="Helical" evidence="2">
    <location>
        <begin position="63"/>
        <end position="83"/>
    </location>
</feature>
<feature type="transmembrane region" description="Helical" evidence="2">
    <location>
        <begin position="85"/>
        <end position="105"/>
    </location>
</feature>
<feature type="transmembrane region" description="Helical" evidence="2">
    <location>
        <begin position="138"/>
        <end position="160"/>
    </location>
</feature>
<feature type="transmembrane region" description="Helical" evidence="2">
    <location>
        <begin position="172"/>
        <end position="192"/>
    </location>
</feature>
<feature type="transmembrane region" description="Helical" evidence="2">
    <location>
        <begin position="210"/>
        <end position="230"/>
    </location>
</feature>
<feature type="transmembrane region" description="Helical" evidence="2">
    <location>
        <begin position="249"/>
        <end position="269"/>
    </location>
</feature>
<feature type="transmembrane region" description="Helical" evidence="2">
    <location>
        <begin position="281"/>
        <end position="301"/>
    </location>
</feature>
<feature type="transmembrane region" description="Helical" evidence="2">
    <location>
        <begin position="318"/>
        <end position="338"/>
    </location>
</feature>
<feature type="transmembrane region" description="Helical" evidence="2">
    <location>
        <begin position="339"/>
        <end position="359"/>
    </location>
</feature>
<feature type="transmembrane region" description="Helical" evidence="2">
    <location>
        <begin position="374"/>
        <end position="394"/>
    </location>
</feature>
<feature type="transmembrane region" description="Helical" evidence="2">
    <location>
        <begin position="417"/>
        <end position="437"/>
    </location>
</feature>
<feature type="transmembrane region" description="Helical" evidence="2">
    <location>
        <begin position="461"/>
        <end position="481"/>
    </location>
</feature>
<feature type="transmembrane region" description="Helical" evidence="2">
    <location>
        <begin position="496"/>
        <end position="516"/>
    </location>
</feature>
<feature type="transmembrane region" description="Helical" evidence="2">
    <location>
        <begin position="594"/>
        <end position="614"/>
    </location>
</feature>
<reference key="1">
    <citation type="journal article" date="2000" name="Nature">
        <title>Complete genome sequence of Pseudomonas aeruginosa PAO1, an opportunistic pathogen.</title>
        <authorList>
            <person name="Stover C.K."/>
            <person name="Pham X.-Q.T."/>
            <person name="Erwin A.L."/>
            <person name="Mizoguchi S.D."/>
            <person name="Warrener P."/>
            <person name="Hickey M.J."/>
            <person name="Brinkman F.S.L."/>
            <person name="Hufnagle W.O."/>
            <person name="Kowalik D.J."/>
            <person name="Lagrou M."/>
            <person name="Garber R.L."/>
            <person name="Goltry L."/>
            <person name="Tolentino E."/>
            <person name="Westbrock-Wadman S."/>
            <person name="Yuan Y."/>
            <person name="Brody L.L."/>
            <person name="Coulter S.N."/>
            <person name="Folger K.R."/>
            <person name="Kas A."/>
            <person name="Larbig K."/>
            <person name="Lim R.M."/>
            <person name="Smith K.A."/>
            <person name="Spencer D.H."/>
            <person name="Wong G.K.-S."/>
            <person name="Wu Z."/>
            <person name="Paulsen I.T."/>
            <person name="Reizer J."/>
            <person name="Saier M.H. Jr."/>
            <person name="Hancock R.E.W."/>
            <person name="Lory S."/>
            <person name="Olson M.V."/>
        </authorList>
    </citation>
    <scope>NUCLEOTIDE SEQUENCE [LARGE SCALE GENOMIC DNA]</scope>
    <source>
        <strain>ATCC 15692 / DSM 22644 / CIP 104116 / JCM 14847 / LMG 12228 / 1C / PRS 101 / PAO1</strain>
    </source>
</reference>
<protein>
    <recommendedName>
        <fullName>NADH-quinone oxidoreductase subunit L</fullName>
        <ecNumber>7.1.1.-</ecNumber>
    </recommendedName>
    <alternativeName>
        <fullName>NADH dehydrogenase I subunit L</fullName>
    </alternativeName>
    <alternativeName>
        <fullName>NDH-1 subunit L</fullName>
    </alternativeName>
</protein>
<dbReference type="EC" id="7.1.1.-"/>
<dbReference type="EMBL" id="AE004091">
    <property type="protein sequence ID" value="AAG06035.1"/>
    <property type="molecule type" value="Genomic_DNA"/>
</dbReference>
<dbReference type="PIR" id="D83315">
    <property type="entry name" value="D83315"/>
</dbReference>
<dbReference type="RefSeq" id="NP_251337.1">
    <property type="nucleotide sequence ID" value="NC_002516.2"/>
</dbReference>
<dbReference type="RefSeq" id="WP_003097681.1">
    <property type="nucleotide sequence ID" value="NZ_QZGE01000008.1"/>
</dbReference>
<dbReference type="SMR" id="Q9I0J1"/>
<dbReference type="FunCoup" id="Q9I0J1">
    <property type="interactions" value="265"/>
</dbReference>
<dbReference type="STRING" id="208964.PA2647"/>
<dbReference type="PaxDb" id="208964-PA2647"/>
<dbReference type="GeneID" id="882356"/>
<dbReference type="KEGG" id="pae:PA2647"/>
<dbReference type="PATRIC" id="fig|208964.12.peg.2770"/>
<dbReference type="PseudoCAP" id="PA2647"/>
<dbReference type="HOGENOM" id="CLU_007100_6_2_6"/>
<dbReference type="InParanoid" id="Q9I0J1"/>
<dbReference type="OrthoDB" id="9811798at2"/>
<dbReference type="PhylomeDB" id="Q9I0J1"/>
<dbReference type="BioCyc" id="PAER208964:G1FZ6-2687-MONOMER"/>
<dbReference type="Proteomes" id="UP000002438">
    <property type="component" value="Chromosome"/>
</dbReference>
<dbReference type="GO" id="GO:0005886">
    <property type="term" value="C:plasma membrane"/>
    <property type="evidence" value="ECO:0007669"/>
    <property type="project" value="UniProtKB-SubCell"/>
</dbReference>
<dbReference type="GO" id="GO:0045271">
    <property type="term" value="C:respiratory chain complex I"/>
    <property type="evidence" value="ECO:0000318"/>
    <property type="project" value="GO_Central"/>
</dbReference>
<dbReference type="GO" id="GO:0008137">
    <property type="term" value="F:NADH dehydrogenase (ubiquinone) activity"/>
    <property type="evidence" value="ECO:0007669"/>
    <property type="project" value="InterPro"/>
</dbReference>
<dbReference type="GO" id="GO:0048038">
    <property type="term" value="F:quinone binding"/>
    <property type="evidence" value="ECO:0007669"/>
    <property type="project" value="UniProtKB-KW"/>
</dbReference>
<dbReference type="GO" id="GO:0042773">
    <property type="term" value="P:ATP synthesis coupled electron transport"/>
    <property type="evidence" value="ECO:0007669"/>
    <property type="project" value="InterPro"/>
</dbReference>
<dbReference type="GO" id="GO:0015990">
    <property type="term" value="P:electron transport coupled proton transport"/>
    <property type="evidence" value="ECO:0000318"/>
    <property type="project" value="GO_Central"/>
</dbReference>
<dbReference type="FunFam" id="1.20.5.2700:FF:000001">
    <property type="entry name" value="NADH-quinone oxidoreductase, L subunit"/>
    <property type="match status" value="1"/>
</dbReference>
<dbReference type="Gene3D" id="1.20.5.2700">
    <property type="match status" value="1"/>
</dbReference>
<dbReference type="InterPro" id="IPR018393">
    <property type="entry name" value="NADHpl_OxRdtase_5_subgr"/>
</dbReference>
<dbReference type="InterPro" id="IPR001750">
    <property type="entry name" value="ND/Mrp_TM"/>
</dbReference>
<dbReference type="InterPro" id="IPR003945">
    <property type="entry name" value="NU5C-like"/>
</dbReference>
<dbReference type="InterPro" id="IPR001516">
    <property type="entry name" value="Proton_antipo_N"/>
</dbReference>
<dbReference type="NCBIfam" id="TIGR01974">
    <property type="entry name" value="NDH_I_L"/>
    <property type="match status" value="1"/>
</dbReference>
<dbReference type="NCBIfam" id="NF005141">
    <property type="entry name" value="PRK06590.1"/>
    <property type="match status" value="1"/>
</dbReference>
<dbReference type="PANTHER" id="PTHR42829">
    <property type="entry name" value="NADH-UBIQUINONE OXIDOREDUCTASE CHAIN 5"/>
    <property type="match status" value="1"/>
</dbReference>
<dbReference type="PANTHER" id="PTHR42829:SF2">
    <property type="entry name" value="NADH-UBIQUINONE OXIDOREDUCTASE CHAIN 5"/>
    <property type="match status" value="1"/>
</dbReference>
<dbReference type="Pfam" id="PF00361">
    <property type="entry name" value="Proton_antipo_M"/>
    <property type="match status" value="1"/>
</dbReference>
<dbReference type="Pfam" id="PF00662">
    <property type="entry name" value="Proton_antipo_N"/>
    <property type="match status" value="1"/>
</dbReference>
<dbReference type="PRINTS" id="PR01434">
    <property type="entry name" value="NADHDHGNASE5"/>
</dbReference>
<dbReference type="PRINTS" id="PR01435">
    <property type="entry name" value="NPOXDRDTASE5"/>
</dbReference>
<keyword id="KW-0997">Cell inner membrane</keyword>
<keyword id="KW-1003">Cell membrane</keyword>
<keyword id="KW-0472">Membrane</keyword>
<keyword id="KW-0520">NAD</keyword>
<keyword id="KW-0874">Quinone</keyword>
<keyword id="KW-1185">Reference proteome</keyword>
<keyword id="KW-1278">Translocase</keyword>
<keyword id="KW-0812">Transmembrane</keyword>
<keyword id="KW-1133">Transmembrane helix</keyword>
<keyword id="KW-0830">Ubiquinone</keyword>
<evidence type="ECO:0000250" key="1"/>
<evidence type="ECO:0000255" key="2"/>
<evidence type="ECO:0000305" key="3"/>
<sequence length="615" mass="66228">MNLLPLTFLFPLVGFLLLSFSRGRWSENLSALVGVGSVGLSALSAAWAIFSFHSSPPEGGAYSLVLWQWMAAGDFSTNFTLYLDGLSVTMLGVVTGVGFLIHLFASWYMRGETGYSRFFAYTNLFIASMLFLVLGDNLLFLYFGWEGVGLCSYLLIGFYYSNRNNGNAALKAFIVTRVGDVFMAFGLFILFQQFGTLNIQELLVLAPQKFPEGNLWLTLATLALLGGAVGKSAQLPLQTWLADAMAGPTPVSALIHAATMVTAGVYLIARCHGLFTLAPDILELVGIVGAVTLVLAGFAALVQTDIKRILAYSTMSQIGYMFLALGVGAWDAAIFHLMTHAFFKALLFLASGAVIVACHHEQNIFKMGGLWKKLPLAYASFVVGGAALAALPFLTAGFYSKDEILWEAFASGHRELLIAGLVGAFLTSIYTFRLIFVAFHGEPKTEAHAGHGISHWLPLSVLIVLSTFVGALITPPLAGVLPESVGHAGGEAKHSLELASGAIAIAGILLAALLFLGQRRFVSALAKSAPGRFFGTWWYHAWGFDWLYDKLFVKPYLLLCQLLGRDPIDRTLGVVPFSVRGGHNLLSLTENGRLRWYAASLVGGAAILLGALLLA</sequence>
<comment type="function">
    <text evidence="1">NDH-1 shuttles electrons from NADH, via FMN and iron-sulfur (Fe-S) centers, to quinones in the respiratory chain. The immediate electron acceptor for the enzyme in this species is believed to be ubiquinone. Couples the redox reaction to proton translocation (for every two electrons transferred, four hydrogen ions are translocated across the cytoplasmic membrane), and thus conserves the redox energy in a proton gradient (By similarity).</text>
</comment>
<comment type="catalytic activity">
    <reaction>
        <text>a quinone + NADH + 5 H(+)(in) = a quinol + NAD(+) + 4 H(+)(out)</text>
        <dbReference type="Rhea" id="RHEA:57888"/>
        <dbReference type="ChEBI" id="CHEBI:15378"/>
        <dbReference type="ChEBI" id="CHEBI:24646"/>
        <dbReference type="ChEBI" id="CHEBI:57540"/>
        <dbReference type="ChEBI" id="CHEBI:57945"/>
        <dbReference type="ChEBI" id="CHEBI:132124"/>
    </reaction>
</comment>
<comment type="subunit">
    <text evidence="1">Composed of 13 different subunits. Subunits NuoA, H, J, K, L, M, N constitute the membrane sector of the complex (By similarity).</text>
</comment>
<comment type="subcellular location">
    <subcellularLocation>
        <location evidence="1">Cell inner membrane</location>
        <topology evidence="1">Multi-pass membrane protein</topology>
    </subcellularLocation>
</comment>
<comment type="similarity">
    <text evidence="3">Belongs to the complex I subunit 5 family.</text>
</comment>